<reference key="1">
    <citation type="journal article" date="2007" name="DNA Res.">
        <title>Complete genomic structure of the bloom-forming toxic cyanobacterium Microcystis aeruginosa NIES-843.</title>
        <authorList>
            <person name="Kaneko T."/>
            <person name="Nakajima N."/>
            <person name="Okamoto S."/>
            <person name="Suzuki I."/>
            <person name="Tanabe Y."/>
            <person name="Tamaoki M."/>
            <person name="Nakamura Y."/>
            <person name="Kasai F."/>
            <person name="Watanabe A."/>
            <person name="Kawashima K."/>
            <person name="Kishida Y."/>
            <person name="Ono A."/>
            <person name="Shimizu Y."/>
            <person name="Takahashi C."/>
            <person name="Minami C."/>
            <person name="Fujishiro T."/>
            <person name="Kohara M."/>
            <person name="Katoh M."/>
            <person name="Nakazaki N."/>
            <person name="Nakayama S."/>
            <person name="Yamada M."/>
            <person name="Tabata S."/>
            <person name="Watanabe M.M."/>
        </authorList>
    </citation>
    <scope>NUCLEOTIDE SEQUENCE [LARGE SCALE GENOMIC DNA]</scope>
    <source>
        <strain>NIES-843 / IAM M-247</strain>
    </source>
</reference>
<proteinExistence type="inferred from homology"/>
<comment type="function">
    <text evidence="1">Could be a nuclease involved in processing of the 5'-end of pre-16S rRNA.</text>
</comment>
<comment type="subcellular location">
    <subcellularLocation>
        <location evidence="1">Cytoplasm</location>
    </subcellularLocation>
</comment>
<comment type="similarity">
    <text evidence="1">Belongs to the YqgF nuclease family.</text>
</comment>
<keyword id="KW-0963">Cytoplasm</keyword>
<keyword id="KW-0378">Hydrolase</keyword>
<keyword id="KW-0540">Nuclease</keyword>
<keyword id="KW-0690">Ribosome biogenesis</keyword>
<sequence length="145" mass="16023">MERVAALGLDIGKKRVGVAGCDGTGLIATGLTTIIRSSFVADIPQFEAIVKERNIKILVAGLPYTMAGELGFQAQQVQKYAQKLAIALDLPLEYIDERCTSLEAEEFLKAKKQFSSWDKGAIDREAAAIILQQWLDRRRRVNTVV</sequence>
<organism>
    <name type="scientific">Microcystis aeruginosa (strain NIES-843 / IAM M-2473)</name>
    <dbReference type="NCBI Taxonomy" id="449447"/>
    <lineage>
        <taxon>Bacteria</taxon>
        <taxon>Bacillati</taxon>
        <taxon>Cyanobacteriota</taxon>
        <taxon>Cyanophyceae</taxon>
        <taxon>Oscillatoriophycideae</taxon>
        <taxon>Chroococcales</taxon>
        <taxon>Microcystaceae</taxon>
        <taxon>Microcystis</taxon>
    </lineage>
</organism>
<protein>
    <recommendedName>
        <fullName evidence="1">Putative pre-16S rRNA nuclease</fullName>
        <ecNumber evidence="1">3.1.-.-</ecNumber>
    </recommendedName>
</protein>
<feature type="chain" id="PRO_1000082749" description="Putative pre-16S rRNA nuclease">
    <location>
        <begin position="1"/>
        <end position="145"/>
    </location>
</feature>
<name>YQGF_MICAN</name>
<evidence type="ECO:0000255" key="1">
    <source>
        <dbReference type="HAMAP-Rule" id="MF_00651"/>
    </source>
</evidence>
<accession>B0JWX2</accession>
<dbReference type="EC" id="3.1.-.-" evidence="1"/>
<dbReference type="EMBL" id="AP009552">
    <property type="protein sequence ID" value="BAG04859.1"/>
    <property type="molecule type" value="Genomic_DNA"/>
</dbReference>
<dbReference type="SMR" id="B0JWX2"/>
<dbReference type="STRING" id="449447.MAE_50370"/>
<dbReference type="PaxDb" id="449447-MAE_50370"/>
<dbReference type="EnsemblBacteria" id="BAG04859">
    <property type="protein sequence ID" value="BAG04859"/>
    <property type="gene ID" value="MAE_50370"/>
</dbReference>
<dbReference type="KEGG" id="mar:MAE_50370"/>
<dbReference type="PATRIC" id="fig|449447.4.peg.4578"/>
<dbReference type="eggNOG" id="COG0816">
    <property type="taxonomic scope" value="Bacteria"/>
</dbReference>
<dbReference type="HOGENOM" id="CLU_098240_3_1_3"/>
<dbReference type="BioCyc" id="MAER449447:MAE_RS21855-MONOMER"/>
<dbReference type="Proteomes" id="UP000001510">
    <property type="component" value="Chromosome"/>
</dbReference>
<dbReference type="GO" id="GO:0005829">
    <property type="term" value="C:cytosol"/>
    <property type="evidence" value="ECO:0007669"/>
    <property type="project" value="TreeGrafter"/>
</dbReference>
<dbReference type="GO" id="GO:0004518">
    <property type="term" value="F:nuclease activity"/>
    <property type="evidence" value="ECO:0007669"/>
    <property type="project" value="UniProtKB-KW"/>
</dbReference>
<dbReference type="GO" id="GO:0000967">
    <property type="term" value="P:rRNA 5'-end processing"/>
    <property type="evidence" value="ECO:0007669"/>
    <property type="project" value="UniProtKB-UniRule"/>
</dbReference>
<dbReference type="CDD" id="cd16964">
    <property type="entry name" value="YqgF"/>
    <property type="match status" value="1"/>
</dbReference>
<dbReference type="Gene3D" id="3.30.420.140">
    <property type="entry name" value="YqgF/RNase H-like domain"/>
    <property type="match status" value="1"/>
</dbReference>
<dbReference type="HAMAP" id="MF_00651">
    <property type="entry name" value="Nuclease_YqgF"/>
    <property type="match status" value="1"/>
</dbReference>
<dbReference type="InterPro" id="IPR012337">
    <property type="entry name" value="RNaseH-like_sf"/>
</dbReference>
<dbReference type="InterPro" id="IPR005227">
    <property type="entry name" value="YqgF"/>
</dbReference>
<dbReference type="InterPro" id="IPR006641">
    <property type="entry name" value="YqgF/RNaseH-like_dom"/>
</dbReference>
<dbReference type="InterPro" id="IPR037027">
    <property type="entry name" value="YqgF/RNaseH-like_dom_sf"/>
</dbReference>
<dbReference type="NCBIfam" id="TIGR00250">
    <property type="entry name" value="RNAse_H_YqgF"/>
    <property type="match status" value="1"/>
</dbReference>
<dbReference type="PANTHER" id="PTHR33317">
    <property type="entry name" value="POLYNUCLEOTIDYL TRANSFERASE, RIBONUCLEASE H-LIKE SUPERFAMILY PROTEIN"/>
    <property type="match status" value="1"/>
</dbReference>
<dbReference type="PANTHER" id="PTHR33317:SF4">
    <property type="entry name" value="POLYNUCLEOTIDYL TRANSFERASE, RIBONUCLEASE H-LIKE SUPERFAMILY PROTEIN"/>
    <property type="match status" value="1"/>
</dbReference>
<dbReference type="Pfam" id="PF03652">
    <property type="entry name" value="RuvX"/>
    <property type="match status" value="1"/>
</dbReference>
<dbReference type="SMART" id="SM00732">
    <property type="entry name" value="YqgFc"/>
    <property type="match status" value="1"/>
</dbReference>
<dbReference type="SUPFAM" id="SSF53098">
    <property type="entry name" value="Ribonuclease H-like"/>
    <property type="match status" value="1"/>
</dbReference>
<gene>
    <name type="ordered locus">MAE_50370</name>
</gene>